<gene>
    <name type="ordered locus">YER079W</name>
</gene>
<proteinExistence type="evidence at protein level"/>
<evidence type="ECO:0000256" key="1">
    <source>
        <dbReference type="SAM" id="MobiDB-lite"/>
    </source>
</evidence>
<evidence type="ECO:0000269" key="2">
    <source>
    </source>
</evidence>
<evidence type="ECO:0007744" key="3">
    <source>
    </source>
</evidence>
<evidence type="ECO:0007744" key="4">
    <source>
    </source>
</evidence>
<evidence type="ECO:0007744" key="5">
    <source>
    </source>
</evidence>
<evidence type="ECO:0007744" key="6">
    <source>
    </source>
</evidence>
<organism>
    <name type="scientific">Saccharomyces cerevisiae (strain ATCC 204508 / S288c)</name>
    <name type="common">Baker's yeast</name>
    <dbReference type="NCBI Taxonomy" id="559292"/>
    <lineage>
        <taxon>Eukaryota</taxon>
        <taxon>Fungi</taxon>
        <taxon>Dikarya</taxon>
        <taxon>Ascomycota</taxon>
        <taxon>Saccharomycotina</taxon>
        <taxon>Saccharomycetes</taxon>
        <taxon>Saccharomycetales</taxon>
        <taxon>Saccharomycetaceae</taxon>
        <taxon>Saccharomyces</taxon>
    </lineage>
</organism>
<sequence>MPDSSHSISSKDVASAISLYDQSIYTNNRSTNLDLDQRSMSPSNIASGEDRITRTNSGCSITSGASMIATKDGIQGINVKRDGIPKYSLNLLNSMVRKQYDHNNGTKSPTPKTSNMVDPKNKKKNKKKKNDKDDKYKVSHDQTEKFYKLNTTSNSNLTSDSTTSLSDQFYFQKSNADSAPLDNANYPLSDHSPSLNSMDNTTKHSSNVHT</sequence>
<keyword id="KW-0597">Phosphoprotein</keyword>
<keyword id="KW-1185">Reference proteome</keyword>
<protein>
    <recommendedName>
        <fullName>Uncharacterized protein YER079W</fullName>
    </recommendedName>
</protein>
<feature type="chain" id="PRO_0000202636" description="Uncharacterized protein YER079W">
    <location>
        <begin position="1"/>
        <end position="210"/>
    </location>
</feature>
<feature type="region of interest" description="Disordered" evidence="1">
    <location>
        <begin position="33"/>
        <end position="58"/>
    </location>
</feature>
<feature type="region of interest" description="Disordered" evidence="1">
    <location>
        <begin position="100"/>
        <end position="139"/>
    </location>
</feature>
<feature type="region of interest" description="Disordered" evidence="1">
    <location>
        <begin position="177"/>
        <end position="210"/>
    </location>
</feature>
<feature type="compositionally biased region" description="Polar residues" evidence="1">
    <location>
        <begin position="33"/>
        <end position="46"/>
    </location>
</feature>
<feature type="compositionally biased region" description="Polar residues" evidence="1">
    <location>
        <begin position="102"/>
        <end position="116"/>
    </location>
</feature>
<feature type="compositionally biased region" description="Basic and acidic residues" evidence="1">
    <location>
        <begin position="130"/>
        <end position="139"/>
    </location>
</feature>
<feature type="compositionally biased region" description="Polar residues" evidence="1">
    <location>
        <begin position="191"/>
        <end position="210"/>
    </location>
</feature>
<feature type="modified residue" description="Phosphoserine" evidence="6">
    <location>
        <position position="18"/>
    </location>
</feature>
<feature type="modified residue" description="Phosphoserine" evidence="5 6">
    <location>
        <position position="39"/>
    </location>
</feature>
<feature type="modified residue" description="Phosphoserine" evidence="6">
    <location>
        <position position="41"/>
    </location>
</feature>
<feature type="modified residue" description="Phosphoserine" evidence="3">
    <location>
        <position position="57"/>
    </location>
</feature>
<feature type="modified residue" description="Phosphoserine" evidence="4">
    <location>
        <position position="60"/>
    </location>
</feature>
<feature type="modified residue" description="Phosphoserine" evidence="6">
    <location>
        <position position="178"/>
    </location>
</feature>
<feature type="modified residue" description="Phosphoserine" evidence="5">
    <location>
        <position position="189"/>
    </location>
</feature>
<feature type="modified residue" description="Phosphoserine" evidence="6">
    <location>
        <position position="192"/>
    </location>
</feature>
<comment type="miscellaneous">
    <text evidence="2">Present with 1890 molecules/cell in log phase SD medium.</text>
</comment>
<name>YEQ9_YEAST</name>
<dbReference type="EMBL" id="U18839">
    <property type="protein sequence ID" value="AAB64634.1"/>
    <property type="molecule type" value="Genomic_DNA"/>
</dbReference>
<dbReference type="EMBL" id="BK006939">
    <property type="protein sequence ID" value="DAA07740.1"/>
    <property type="molecule type" value="Genomic_DNA"/>
</dbReference>
<dbReference type="PIR" id="S50582">
    <property type="entry name" value="S50582"/>
</dbReference>
<dbReference type="RefSeq" id="NP_011002.1">
    <property type="nucleotide sequence ID" value="NM_001178970.1"/>
</dbReference>
<dbReference type="SMR" id="P40052"/>
<dbReference type="BioGRID" id="36824">
    <property type="interactions" value="152"/>
</dbReference>
<dbReference type="DIP" id="DIP-1773N"/>
<dbReference type="FunCoup" id="P40052">
    <property type="interactions" value="139"/>
</dbReference>
<dbReference type="IntAct" id="P40052">
    <property type="interactions" value="4"/>
</dbReference>
<dbReference type="MINT" id="P40052"/>
<dbReference type="STRING" id="4932.YER079W"/>
<dbReference type="iPTMnet" id="P40052"/>
<dbReference type="PaxDb" id="4932-YER079W"/>
<dbReference type="PeptideAtlas" id="P40052"/>
<dbReference type="TopDownProteomics" id="P40052"/>
<dbReference type="EnsemblFungi" id="YER079W_mRNA">
    <property type="protein sequence ID" value="YER079W"/>
    <property type="gene ID" value="YER079W"/>
</dbReference>
<dbReference type="GeneID" id="856812"/>
<dbReference type="KEGG" id="sce:YER079W"/>
<dbReference type="AGR" id="SGD:S000000881"/>
<dbReference type="SGD" id="S000000881">
    <property type="gene designation" value="YER079W"/>
</dbReference>
<dbReference type="VEuPathDB" id="FungiDB:YER079W"/>
<dbReference type="HOGENOM" id="CLU_1278273_0_0_1"/>
<dbReference type="InParanoid" id="P40052"/>
<dbReference type="OrthoDB" id="3981113at2759"/>
<dbReference type="BioCyc" id="YEAST:G3O-30250-MONOMER"/>
<dbReference type="BioGRID-ORCS" id="856812">
    <property type="hits" value="1 hit in 10 CRISPR screens"/>
</dbReference>
<dbReference type="PRO" id="PR:P40052"/>
<dbReference type="Proteomes" id="UP000002311">
    <property type="component" value="Chromosome V"/>
</dbReference>
<dbReference type="RNAct" id="P40052">
    <property type="molecule type" value="protein"/>
</dbReference>
<dbReference type="GO" id="GO:0005737">
    <property type="term" value="C:cytoplasm"/>
    <property type="evidence" value="ECO:0007005"/>
    <property type="project" value="SGD"/>
</dbReference>
<dbReference type="GO" id="GO:0005634">
    <property type="term" value="C:nucleus"/>
    <property type="evidence" value="ECO:0007005"/>
    <property type="project" value="SGD"/>
</dbReference>
<accession>P40052</accession>
<accession>D3DLY6</accession>
<reference key="1">
    <citation type="journal article" date="1997" name="Nature">
        <title>The nucleotide sequence of Saccharomyces cerevisiae chromosome V.</title>
        <authorList>
            <person name="Dietrich F.S."/>
            <person name="Mulligan J.T."/>
            <person name="Hennessy K.M."/>
            <person name="Yelton M.A."/>
            <person name="Allen E."/>
            <person name="Araujo R."/>
            <person name="Aviles E."/>
            <person name="Berno A."/>
            <person name="Brennan T."/>
            <person name="Carpenter J."/>
            <person name="Chen E."/>
            <person name="Cherry J.M."/>
            <person name="Chung E."/>
            <person name="Duncan M."/>
            <person name="Guzman E."/>
            <person name="Hartzell G."/>
            <person name="Hunicke-Smith S."/>
            <person name="Hyman R.W."/>
            <person name="Kayser A."/>
            <person name="Komp C."/>
            <person name="Lashkari D."/>
            <person name="Lew H."/>
            <person name="Lin D."/>
            <person name="Mosedale D."/>
            <person name="Nakahara K."/>
            <person name="Namath A."/>
            <person name="Norgren R."/>
            <person name="Oefner P."/>
            <person name="Oh C."/>
            <person name="Petel F.X."/>
            <person name="Roberts D."/>
            <person name="Sehl P."/>
            <person name="Schramm S."/>
            <person name="Shogren T."/>
            <person name="Smith V."/>
            <person name="Taylor P."/>
            <person name="Wei Y."/>
            <person name="Botstein D."/>
            <person name="Davis R.W."/>
        </authorList>
    </citation>
    <scope>NUCLEOTIDE SEQUENCE [LARGE SCALE GENOMIC DNA]</scope>
    <source>
        <strain>ATCC 204508 / S288c</strain>
    </source>
</reference>
<reference key="2">
    <citation type="journal article" date="2014" name="G3 (Bethesda)">
        <title>The reference genome sequence of Saccharomyces cerevisiae: Then and now.</title>
        <authorList>
            <person name="Engel S.R."/>
            <person name="Dietrich F.S."/>
            <person name="Fisk D.G."/>
            <person name="Binkley G."/>
            <person name="Balakrishnan R."/>
            <person name="Costanzo M.C."/>
            <person name="Dwight S.S."/>
            <person name="Hitz B.C."/>
            <person name="Karra K."/>
            <person name="Nash R.S."/>
            <person name="Weng S."/>
            <person name="Wong E.D."/>
            <person name="Lloyd P."/>
            <person name="Skrzypek M.S."/>
            <person name="Miyasato S.R."/>
            <person name="Simison M."/>
            <person name="Cherry J.M."/>
        </authorList>
    </citation>
    <scope>GENOME REANNOTATION</scope>
    <source>
        <strain>ATCC 204508 / S288c</strain>
    </source>
</reference>
<reference key="3">
    <citation type="journal article" date="2003" name="Nature">
        <title>Global analysis of protein expression in yeast.</title>
        <authorList>
            <person name="Ghaemmaghami S."/>
            <person name="Huh W.-K."/>
            <person name="Bower K."/>
            <person name="Howson R.W."/>
            <person name="Belle A."/>
            <person name="Dephoure N."/>
            <person name="O'Shea E.K."/>
            <person name="Weissman J.S."/>
        </authorList>
    </citation>
    <scope>LEVEL OF PROTEIN EXPRESSION [LARGE SCALE ANALYSIS]</scope>
</reference>
<reference key="4">
    <citation type="journal article" date="2005" name="Mol. Cell. Proteomics">
        <title>Quantitative phosphoproteomics applied to the yeast pheromone signaling pathway.</title>
        <authorList>
            <person name="Gruhler A."/>
            <person name="Olsen J.V."/>
            <person name="Mohammed S."/>
            <person name="Mortensen P."/>
            <person name="Faergeman N.J."/>
            <person name="Mann M."/>
            <person name="Jensen O.N."/>
        </authorList>
    </citation>
    <scope>PHOSPHORYLATION [LARGE SCALE ANALYSIS] AT SER-57</scope>
    <scope>IDENTIFICATION BY MASS SPECTROMETRY [LARGE SCALE ANALYSIS]</scope>
    <source>
        <strain>YAL6B</strain>
    </source>
</reference>
<reference key="5">
    <citation type="journal article" date="2007" name="J. Proteome Res.">
        <title>Large-scale phosphorylation analysis of alpha-factor-arrested Saccharomyces cerevisiae.</title>
        <authorList>
            <person name="Li X."/>
            <person name="Gerber S.A."/>
            <person name="Rudner A.D."/>
            <person name="Beausoleil S.A."/>
            <person name="Haas W."/>
            <person name="Villen J."/>
            <person name="Elias J.E."/>
            <person name="Gygi S.P."/>
        </authorList>
    </citation>
    <scope>PHOSPHORYLATION [LARGE SCALE ANALYSIS] AT SER-60</scope>
    <scope>IDENTIFICATION BY MASS SPECTROMETRY [LARGE SCALE ANALYSIS]</scope>
    <source>
        <strain>ADR376</strain>
    </source>
</reference>
<reference key="6">
    <citation type="journal article" date="2008" name="Mol. Cell. Proteomics">
        <title>A multidimensional chromatography technology for in-depth phosphoproteome analysis.</title>
        <authorList>
            <person name="Albuquerque C.P."/>
            <person name="Smolka M.B."/>
            <person name="Payne S.H."/>
            <person name="Bafna V."/>
            <person name="Eng J."/>
            <person name="Zhou H."/>
        </authorList>
    </citation>
    <scope>PHOSPHORYLATION [LARGE SCALE ANALYSIS] AT SER-39 AND SER-189</scope>
    <scope>IDENTIFICATION BY MASS SPECTROMETRY [LARGE SCALE ANALYSIS]</scope>
</reference>
<reference key="7">
    <citation type="journal article" date="2009" name="Science">
        <title>Global analysis of Cdk1 substrate phosphorylation sites provides insights into evolution.</title>
        <authorList>
            <person name="Holt L.J."/>
            <person name="Tuch B.B."/>
            <person name="Villen J."/>
            <person name="Johnson A.D."/>
            <person name="Gygi S.P."/>
            <person name="Morgan D.O."/>
        </authorList>
    </citation>
    <scope>PHOSPHORYLATION [LARGE SCALE ANALYSIS] AT SER-18; SER-39; SER-41; SER-178 AND SER-192</scope>
    <scope>IDENTIFICATION BY MASS SPECTROMETRY [LARGE SCALE ANALYSIS]</scope>
</reference>